<feature type="signal peptide" evidence="1">
    <location>
        <begin position="1"/>
        <end position="29"/>
    </location>
</feature>
<feature type="chain" id="PRO_1000100493" description="Outer-membrane lipoprotein LolB">
    <location>
        <begin position="30"/>
        <end position="210"/>
    </location>
</feature>
<feature type="lipid moiety-binding region" description="N-palmitoyl cysteine" evidence="1">
    <location>
        <position position="30"/>
    </location>
</feature>
<feature type="lipid moiety-binding region" description="S-diacylglycerol cysteine" evidence="1">
    <location>
        <position position="30"/>
    </location>
</feature>
<protein>
    <recommendedName>
        <fullName evidence="1">Outer-membrane lipoprotein LolB</fullName>
    </recommendedName>
</protein>
<accession>B6J319</accession>
<dbReference type="EMBL" id="CP001019">
    <property type="protein sequence ID" value="ACJ17649.1"/>
    <property type="molecule type" value="Genomic_DNA"/>
</dbReference>
<dbReference type="RefSeq" id="WP_011996384.1">
    <property type="nucleotide sequence ID" value="NC_011527.1"/>
</dbReference>
<dbReference type="SMR" id="B6J319"/>
<dbReference type="KEGG" id="cbg:CbuG_0202"/>
<dbReference type="HOGENOM" id="CLU_092816_2_1_6"/>
<dbReference type="GO" id="GO:0009279">
    <property type="term" value="C:cell outer membrane"/>
    <property type="evidence" value="ECO:0007669"/>
    <property type="project" value="UniProtKB-SubCell"/>
</dbReference>
<dbReference type="GO" id="GO:0044874">
    <property type="term" value="P:lipoprotein localization to outer membrane"/>
    <property type="evidence" value="ECO:0007669"/>
    <property type="project" value="UniProtKB-UniRule"/>
</dbReference>
<dbReference type="GO" id="GO:0015031">
    <property type="term" value="P:protein transport"/>
    <property type="evidence" value="ECO:0007669"/>
    <property type="project" value="UniProtKB-KW"/>
</dbReference>
<dbReference type="CDD" id="cd16326">
    <property type="entry name" value="LolB"/>
    <property type="match status" value="1"/>
</dbReference>
<dbReference type="Gene3D" id="2.50.20.10">
    <property type="entry name" value="Lipoprotein localisation LolA/LolB/LppX"/>
    <property type="match status" value="1"/>
</dbReference>
<dbReference type="HAMAP" id="MF_00233">
    <property type="entry name" value="LolB"/>
    <property type="match status" value="1"/>
</dbReference>
<dbReference type="InterPro" id="IPR029046">
    <property type="entry name" value="LolA/LolB/LppX"/>
</dbReference>
<dbReference type="InterPro" id="IPR004565">
    <property type="entry name" value="OM_lipoprot_LolB"/>
</dbReference>
<dbReference type="NCBIfam" id="TIGR00548">
    <property type="entry name" value="lolB"/>
    <property type="match status" value="1"/>
</dbReference>
<dbReference type="Pfam" id="PF03550">
    <property type="entry name" value="LolB"/>
    <property type="match status" value="1"/>
</dbReference>
<dbReference type="SUPFAM" id="SSF89392">
    <property type="entry name" value="Prokaryotic lipoproteins and lipoprotein localization factors"/>
    <property type="match status" value="1"/>
</dbReference>
<comment type="function">
    <text evidence="1">Plays a critical role in the incorporation of lipoproteins in the outer membrane after they are released by the LolA protein.</text>
</comment>
<comment type="subunit">
    <text evidence="1">Monomer.</text>
</comment>
<comment type="subcellular location">
    <subcellularLocation>
        <location evidence="1">Cell outer membrane</location>
        <topology evidence="1">Lipid-anchor</topology>
    </subcellularLocation>
</comment>
<comment type="similarity">
    <text evidence="1">Belongs to the LolB family.</text>
</comment>
<gene>
    <name evidence="1" type="primary">lolB</name>
    <name type="ordered locus">CbuG_0202</name>
</gene>
<keyword id="KW-0998">Cell outer membrane</keyword>
<keyword id="KW-0143">Chaperone</keyword>
<keyword id="KW-0449">Lipoprotein</keyword>
<keyword id="KW-0472">Membrane</keyword>
<keyword id="KW-0564">Palmitate</keyword>
<keyword id="KW-0653">Protein transport</keyword>
<keyword id="KW-0732">Signal</keyword>
<keyword id="KW-0813">Transport</keyword>
<reference key="1">
    <citation type="journal article" date="2009" name="Infect. Immun.">
        <title>Comparative genomics reveal extensive transposon-mediated genomic plasticity and diversity among potential effector proteins within the genus Coxiella.</title>
        <authorList>
            <person name="Beare P.A."/>
            <person name="Unsworth N."/>
            <person name="Andoh M."/>
            <person name="Voth D.E."/>
            <person name="Omsland A."/>
            <person name="Gilk S.D."/>
            <person name="Williams K.P."/>
            <person name="Sobral B.W."/>
            <person name="Kupko J.J. III"/>
            <person name="Porcella S.F."/>
            <person name="Samuel J.E."/>
            <person name="Heinzen R.A."/>
        </authorList>
    </citation>
    <scope>NUCLEOTIDE SEQUENCE [LARGE SCALE GENOMIC DNA]</scope>
    <source>
        <strain>CbuG_Q212</strain>
    </source>
</reference>
<name>LOLB_COXB2</name>
<evidence type="ECO:0000255" key="1">
    <source>
        <dbReference type="HAMAP-Rule" id="MF_00233"/>
    </source>
</evidence>
<sequence>MSLISNNEERSLRVRYCIAIALSALLISGCTTLRLPNQSTSVYHQQTWAQRYYDLSRISQWNIDGAFSIQQPGKTIIAAYDWQQKGMNYRIRIHSSLDIYSVNISGRPGMVTLWRSPRQHYTASTPEQLMQQQLGWQLPLSNLYYWIRGIPAPGAYQADFDTYTHLIALQQSGWHIRFSQYTTVGSVDLPRTLQLSNGPLAVKIVVKHWQ</sequence>
<organism>
    <name type="scientific">Coxiella burnetii (strain CbuG_Q212)</name>
    <name type="common">Coxiella burnetii (strain Q212)</name>
    <dbReference type="NCBI Taxonomy" id="434923"/>
    <lineage>
        <taxon>Bacteria</taxon>
        <taxon>Pseudomonadati</taxon>
        <taxon>Pseudomonadota</taxon>
        <taxon>Gammaproteobacteria</taxon>
        <taxon>Legionellales</taxon>
        <taxon>Coxiellaceae</taxon>
        <taxon>Coxiella</taxon>
    </lineage>
</organism>
<proteinExistence type="inferred from homology"/>